<reference key="1">
    <citation type="journal article" date="2004" name="Nat. Biotechnol.">
        <title>Complete genome sequence of the metabolically versatile photosynthetic bacterium Rhodopseudomonas palustris.</title>
        <authorList>
            <person name="Larimer F.W."/>
            <person name="Chain P."/>
            <person name="Hauser L."/>
            <person name="Lamerdin J.E."/>
            <person name="Malfatti S."/>
            <person name="Do L."/>
            <person name="Land M.L."/>
            <person name="Pelletier D.A."/>
            <person name="Beatty J.T."/>
            <person name="Lang A.S."/>
            <person name="Tabita F.R."/>
            <person name="Gibson J.L."/>
            <person name="Hanson T.E."/>
            <person name="Bobst C."/>
            <person name="Torres y Torres J.L."/>
            <person name="Peres C."/>
            <person name="Harrison F.H."/>
            <person name="Gibson J."/>
            <person name="Harwood C.S."/>
        </authorList>
    </citation>
    <scope>NUCLEOTIDE SEQUENCE [LARGE SCALE GENOMIC DNA]</scope>
    <source>
        <strain>ATCC BAA-98 / CGA009</strain>
    </source>
</reference>
<reference key="2">
    <citation type="journal article" date="2004" name="J. Proteome Res.">
        <title>Characterization of the 70S ribosome from Rhodopseudomonas palustris using an integrated 'top-down' and 'bottom-up' mass spectrometric approach.</title>
        <authorList>
            <person name="Strader M.B."/>
            <person name="VerBerkmoes N.C."/>
            <person name="Tabb D.L."/>
            <person name="Connelly H.M."/>
            <person name="Barton J.W."/>
            <person name="Bruce B.D."/>
            <person name="Pelletier D.A."/>
            <person name="Davison B.H."/>
            <person name="Hettich R.L."/>
            <person name="Larimer F.W."/>
            <person name="Hurst G.B."/>
        </authorList>
    </citation>
    <scope>MASS SPECTROMETRY</scope>
    <source>
        <strain>ATCC BAA-98 / CGA009</strain>
    </source>
</reference>
<feature type="chain" id="PRO_0000173153" description="Large ribosomal subunit protein bL31">
    <location>
        <begin position="1"/>
        <end position="75"/>
    </location>
</feature>
<comment type="function">
    <text evidence="1">Binds the 23S rRNA.</text>
</comment>
<comment type="subunit">
    <text evidence="1">Part of the 50S ribosomal subunit.</text>
</comment>
<comment type="mass spectrometry" mass="8566.3" method="Electrospray" evidence="2"/>
<comment type="similarity">
    <text evidence="1">Belongs to the bacterial ribosomal protein bL31 family. Type A subfamily.</text>
</comment>
<dbReference type="EMBL" id="BX572595">
    <property type="protein sequence ID" value="CAE26362.1"/>
    <property type="molecule type" value="Genomic_DNA"/>
</dbReference>
<dbReference type="RefSeq" id="WP_011156453.1">
    <property type="nucleotide sequence ID" value="NZ_CP116810.1"/>
</dbReference>
<dbReference type="SMR" id="Q6NBB0"/>
<dbReference type="IntAct" id="Q6NBB0">
    <property type="interactions" value="1"/>
</dbReference>
<dbReference type="STRING" id="258594.RPA0918"/>
<dbReference type="GeneID" id="66891937"/>
<dbReference type="eggNOG" id="COG0254">
    <property type="taxonomic scope" value="Bacteria"/>
</dbReference>
<dbReference type="HOGENOM" id="CLU_114306_3_2_5"/>
<dbReference type="PhylomeDB" id="Q6NBB0"/>
<dbReference type="GO" id="GO:1990904">
    <property type="term" value="C:ribonucleoprotein complex"/>
    <property type="evidence" value="ECO:0007669"/>
    <property type="project" value="UniProtKB-KW"/>
</dbReference>
<dbReference type="GO" id="GO:0005840">
    <property type="term" value="C:ribosome"/>
    <property type="evidence" value="ECO:0007669"/>
    <property type="project" value="UniProtKB-KW"/>
</dbReference>
<dbReference type="GO" id="GO:0019843">
    <property type="term" value="F:rRNA binding"/>
    <property type="evidence" value="ECO:0007669"/>
    <property type="project" value="UniProtKB-KW"/>
</dbReference>
<dbReference type="GO" id="GO:0003735">
    <property type="term" value="F:structural constituent of ribosome"/>
    <property type="evidence" value="ECO:0007669"/>
    <property type="project" value="InterPro"/>
</dbReference>
<dbReference type="GO" id="GO:0006412">
    <property type="term" value="P:translation"/>
    <property type="evidence" value="ECO:0007669"/>
    <property type="project" value="UniProtKB-UniRule"/>
</dbReference>
<dbReference type="Gene3D" id="4.10.830.30">
    <property type="entry name" value="Ribosomal protein L31"/>
    <property type="match status" value="1"/>
</dbReference>
<dbReference type="HAMAP" id="MF_00501">
    <property type="entry name" value="Ribosomal_bL31_1"/>
    <property type="match status" value="1"/>
</dbReference>
<dbReference type="InterPro" id="IPR034704">
    <property type="entry name" value="Ribosomal_bL28/bL31-like_sf"/>
</dbReference>
<dbReference type="InterPro" id="IPR002150">
    <property type="entry name" value="Ribosomal_bL31"/>
</dbReference>
<dbReference type="InterPro" id="IPR027491">
    <property type="entry name" value="Ribosomal_bL31_A"/>
</dbReference>
<dbReference type="InterPro" id="IPR042105">
    <property type="entry name" value="Ribosomal_bL31_sf"/>
</dbReference>
<dbReference type="NCBIfam" id="TIGR00105">
    <property type="entry name" value="L31"/>
    <property type="match status" value="1"/>
</dbReference>
<dbReference type="NCBIfam" id="NF001809">
    <property type="entry name" value="PRK00528.1"/>
    <property type="match status" value="1"/>
</dbReference>
<dbReference type="PANTHER" id="PTHR33280">
    <property type="entry name" value="50S RIBOSOMAL PROTEIN L31, CHLOROPLASTIC"/>
    <property type="match status" value="1"/>
</dbReference>
<dbReference type="PANTHER" id="PTHR33280:SF6">
    <property type="entry name" value="LARGE RIBOSOMAL SUBUNIT PROTEIN BL31A"/>
    <property type="match status" value="1"/>
</dbReference>
<dbReference type="Pfam" id="PF01197">
    <property type="entry name" value="Ribosomal_L31"/>
    <property type="match status" value="1"/>
</dbReference>
<dbReference type="PRINTS" id="PR01249">
    <property type="entry name" value="RIBOSOMALL31"/>
</dbReference>
<dbReference type="SUPFAM" id="SSF143800">
    <property type="entry name" value="L28p-like"/>
    <property type="match status" value="1"/>
</dbReference>
<dbReference type="PROSITE" id="PS01143">
    <property type="entry name" value="RIBOSOMAL_L31"/>
    <property type="match status" value="1"/>
</dbReference>
<keyword id="KW-0687">Ribonucleoprotein</keyword>
<keyword id="KW-0689">Ribosomal protein</keyword>
<keyword id="KW-0694">RNA-binding</keyword>
<keyword id="KW-0699">rRNA-binding</keyword>
<organism>
    <name type="scientific">Rhodopseudomonas palustris (strain ATCC BAA-98 / CGA009)</name>
    <dbReference type="NCBI Taxonomy" id="258594"/>
    <lineage>
        <taxon>Bacteria</taxon>
        <taxon>Pseudomonadati</taxon>
        <taxon>Pseudomonadota</taxon>
        <taxon>Alphaproteobacteria</taxon>
        <taxon>Hyphomicrobiales</taxon>
        <taxon>Nitrobacteraceae</taxon>
        <taxon>Rhodopseudomonas</taxon>
    </lineage>
</organism>
<accession>Q6NBB0</accession>
<evidence type="ECO:0000255" key="1">
    <source>
        <dbReference type="HAMAP-Rule" id="MF_00501"/>
    </source>
</evidence>
<evidence type="ECO:0000269" key="2">
    <source>
    </source>
</evidence>
<evidence type="ECO:0000305" key="3"/>
<name>RL31_RHOPA</name>
<gene>
    <name evidence="1" type="primary">rpmE</name>
    <name type="ordered locus">RPA0918</name>
</gene>
<proteinExistence type="evidence at protein level"/>
<sequence length="75" mass="8568">MKTEIHPDYHTITVVMTDGTEYQTRSTWGKEGDKLNLDIDPKSHPAWTGGTQQVLDRGGRVSRFQKKFSGFLKKD</sequence>
<protein>
    <recommendedName>
        <fullName evidence="1">Large ribosomal subunit protein bL31</fullName>
    </recommendedName>
    <alternativeName>
        <fullName evidence="3">50S ribosomal protein L31</fullName>
    </alternativeName>
    <alternativeName>
        <fullName>RRP-L31</fullName>
    </alternativeName>
</protein>